<accession>P24323</accession>
<reference key="1">
    <citation type="journal article" date="1991" name="Mol. Microbiol.">
        <title>Molecular analysis of a complex locus from Haemophilus influenzae involved in phase-variable lipopolysaccharide biosynthesis.</title>
        <authorList>
            <person name="Maskell D.J."/>
            <person name="Szabo M.J."/>
            <person name="Butler P.D."/>
            <person name="Williams A.E."/>
            <person name="Moxon E.R."/>
        </authorList>
    </citation>
    <scope>NUCLEOTIDE SEQUENCE [GENOMIC DNA]</scope>
    <source>
        <strain>RM 7004 / Serotype B</strain>
    </source>
</reference>
<reference key="2">
    <citation type="journal article" date="1995" name="Science">
        <title>Whole-genome random sequencing and assembly of Haemophilus influenzae Rd.</title>
        <authorList>
            <person name="Fleischmann R.D."/>
            <person name="Adams M.D."/>
            <person name="White O."/>
            <person name="Clayton R.A."/>
            <person name="Kirkness E.F."/>
            <person name="Kerlavage A.R."/>
            <person name="Bult C.J."/>
            <person name="Tomb J.-F."/>
            <person name="Dougherty B.A."/>
            <person name="Merrick J.M."/>
            <person name="McKenney K."/>
            <person name="Sutton G.G."/>
            <person name="FitzHugh W."/>
            <person name="Fields C.A."/>
            <person name="Gocayne J.D."/>
            <person name="Scott J.D."/>
            <person name="Shirley R."/>
            <person name="Liu L.-I."/>
            <person name="Glodek A."/>
            <person name="Kelley J.M."/>
            <person name="Weidman J.F."/>
            <person name="Phillips C.A."/>
            <person name="Spriggs T."/>
            <person name="Hedblom E."/>
            <person name="Cotton M.D."/>
            <person name="Utterback T.R."/>
            <person name="Hanna M.C."/>
            <person name="Nguyen D.T."/>
            <person name="Saudek D.M."/>
            <person name="Brandon R.C."/>
            <person name="Fine L.D."/>
            <person name="Fritchman J.L."/>
            <person name="Fuhrmann J.L."/>
            <person name="Geoghagen N.S.M."/>
            <person name="Gnehm C.L."/>
            <person name="McDonald L.A."/>
            <person name="Small K.V."/>
            <person name="Fraser C.M."/>
            <person name="Smith H.O."/>
            <person name="Venter J.C."/>
        </authorList>
    </citation>
    <scope>NUCLEOTIDE SEQUENCE [LARGE SCALE GENOMIC DNA]</scope>
    <source>
        <strain>ATCC 51907 / DSM 11121 / KW20 / Rd</strain>
    </source>
</reference>
<feature type="chain" id="PRO_0000158776" description="Adenylate kinase">
    <location>
        <begin position="1"/>
        <end position="214"/>
    </location>
</feature>
<feature type="region of interest" description="NMP" evidence="1">
    <location>
        <begin position="30"/>
        <end position="59"/>
    </location>
</feature>
<feature type="region of interest" description="LID" evidence="1">
    <location>
        <begin position="122"/>
        <end position="159"/>
    </location>
</feature>
<feature type="binding site" evidence="1">
    <location>
        <begin position="10"/>
        <end position="15"/>
    </location>
    <ligand>
        <name>ATP</name>
        <dbReference type="ChEBI" id="CHEBI:30616"/>
    </ligand>
</feature>
<feature type="binding site" evidence="1">
    <location>
        <position position="31"/>
    </location>
    <ligand>
        <name>AMP</name>
        <dbReference type="ChEBI" id="CHEBI:456215"/>
    </ligand>
</feature>
<feature type="binding site" evidence="1">
    <location>
        <position position="36"/>
    </location>
    <ligand>
        <name>AMP</name>
        <dbReference type="ChEBI" id="CHEBI:456215"/>
    </ligand>
</feature>
<feature type="binding site" evidence="1">
    <location>
        <begin position="57"/>
        <end position="59"/>
    </location>
    <ligand>
        <name>AMP</name>
        <dbReference type="ChEBI" id="CHEBI:456215"/>
    </ligand>
</feature>
<feature type="binding site" evidence="1">
    <location>
        <begin position="85"/>
        <end position="88"/>
    </location>
    <ligand>
        <name>AMP</name>
        <dbReference type="ChEBI" id="CHEBI:456215"/>
    </ligand>
</feature>
<feature type="binding site" evidence="1">
    <location>
        <position position="92"/>
    </location>
    <ligand>
        <name>AMP</name>
        <dbReference type="ChEBI" id="CHEBI:456215"/>
    </ligand>
</feature>
<feature type="binding site" evidence="1">
    <location>
        <position position="123"/>
    </location>
    <ligand>
        <name>ATP</name>
        <dbReference type="ChEBI" id="CHEBI:30616"/>
    </ligand>
</feature>
<feature type="binding site" evidence="1">
    <location>
        <begin position="132"/>
        <end position="133"/>
    </location>
    <ligand>
        <name>ATP</name>
        <dbReference type="ChEBI" id="CHEBI:30616"/>
    </ligand>
</feature>
<feature type="binding site" evidence="1">
    <location>
        <position position="156"/>
    </location>
    <ligand>
        <name>AMP</name>
        <dbReference type="ChEBI" id="CHEBI:456215"/>
    </ligand>
</feature>
<feature type="binding site" evidence="1">
    <location>
        <position position="167"/>
    </location>
    <ligand>
        <name>AMP</name>
        <dbReference type="ChEBI" id="CHEBI:456215"/>
    </ligand>
</feature>
<feature type="binding site" evidence="1">
    <location>
        <position position="200"/>
    </location>
    <ligand>
        <name>ATP</name>
        <dbReference type="ChEBI" id="CHEBI:30616"/>
    </ligand>
</feature>
<feature type="sequence conflict" description="In Ref. 1; CAA40570." evidence="2" ref="1">
    <original>T</original>
    <variation>A</variation>
    <location>
        <position position="78"/>
    </location>
</feature>
<name>KAD_HAEIN</name>
<evidence type="ECO:0000255" key="1">
    <source>
        <dbReference type="HAMAP-Rule" id="MF_00235"/>
    </source>
</evidence>
<evidence type="ECO:0000305" key="2"/>
<sequence>MKIILLGAPGAGKGTQAQFIMNKFGIPQISTGDMFRAAIKAGTELGKQAKALMDEGKLVPDELTVALVKDRIAQADCTNGFLLDGFPRTIPQADALKDSGVKIDFVLEFDVPDEVIVERMSGRRVHQASGRSYHIVYNPPKVEGKDDVTGEDLIIRADDKPETVLDRLAVYHKQTSPLIDYYQAEAKAGNTQYFRLDGTQKVEEVSQELDKILG</sequence>
<comment type="function">
    <text evidence="1">Catalyzes the reversible transfer of the terminal phosphate group between ATP and AMP. Plays an important role in cellular energy homeostasis and in adenine nucleotide metabolism (By similarity). It may be linked to the biosynthesis of lipopolysaccharide surface molecules, which are important for the pathogenesis of H.influenzae.</text>
</comment>
<comment type="catalytic activity">
    <reaction evidence="1">
        <text>AMP + ATP = 2 ADP</text>
        <dbReference type="Rhea" id="RHEA:12973"/>
        <dbReference type="ChEBI" id="CHEBI:30616"/>
        <dbReference type="ChEBI" id="CHEBI:456215"/>
        <dbReference type="ChEBI" id="CHEBI:456216"/>
        <dbReference type="EC" id="2.7.4.3"/>
    </reaction>
</comment>
<comment type="pathway">
    <text evidence="1">Purine metabolism; AMP biosynthesis via salvage pathway; AMP from ADP: step 1/1.</text>
</comment>
<comment type="subunit">
    <text evidence="1">Monomer.</text>
</comment>
<comment type="subcellular location">
    <subcellularLocation>
        <location>Cytoplasm</location>
    </subcellularLocation>
</comment>
<comment type="domain">
    <text evidence="1">Consists of three domains, a large central CORE domain and two small peripheral domains, NMPbind and LID, which undergo movements during catalysis. The LID domain closes over the site of phosphoryl transfer upon ATP binding. Assembling and dissambling the active center during each catalytic cycle provides an effective means to prevent ATP hydrolysis.</text>
</comment>
<comment type="similarity">
    <text evidence="1">Belongs to the adenylate kinase family.</text>
</comment>
<protein>
    <recommendedName>
        <fullName evidence="1">Adenylate kinase</fullName>
        <shortName evidence="1">AK</shortName>
        <ecNumber evidence="1">2.7.4.3</ecNumber>
    </recommendedName>
    <alternativeName>
        <fullName evidence="1">ATP-AMP transphosphorylase</fullName>
    </alternativeName>
    <alternativeName>
        <fullName evidence="1">ATP:AMP phosphotransferase</fullName>
    </alternativeName>
    <alternativeName>
        <fullName evidence="1">Adenylate monophosphate kinase</fullName>
    </alternativeName>
</protein>
<gene>
    <name evidence="1" type="primary">adk</name>
    <name type="ordered locus">HI_0349</name>
</gene>
<dbReference type="EC" id="2.7.4.3" evidence="1"/>
<dbReference type="EMBL" id="X57315">
    <property type="protein sequence ID" value="CAA40570.1"/>
    <property type="molecule type" value="Genomic_DNA"/>
</dbReference>
<dbReference type="EMBL" id="L42023">
    <property type="protein sequence ID" value="AAC22010.1"/>
    <property type="molecule type" value="Genomic_DNA"/>
</dbReference>
<dbReference type="PIR" id="I64062">
    <property type="entry name" value="I64062"/>
</dbReference>
<dbReference type="RefSeq" id="NP_438513.1">
    <property type="nucleotide sequence ID" value="NC_000907.1"/>
</dbReference>
<dbReference type="SMR" id="P24323"/>
<dbReference type="STRING" id="71421.HI_0349"/>
<dbReference type="EnsemblBacteria" id="AAC22010">
    <property type="protein sequence ID" value="AAC22010"/>
    <property type="gene ID" value="HI_0349"/>
</dbReference>
<dbReference type="KEGG" id="hin:HI_0349"/>
<dbReference type="PATRIC" id="fig|71421.8.peg.368"/>
<dbReference type="eggNOG" id="COG0563">
    <property type="taxonomic scope" value="Bacteria"/>
</dbReference>
<dbReference type="HOGENOM" id="CLU_032354_1_2_6"/>
<dbReference type="OrthoDB" id="9805030at2"/>
<dbReference type="PhylomeDB" id="P24323"/>
<dbReference type="BioCyc" id="HINF71421:G1GJ1-365-MONOMER"/>
<dbReference type="UniPathway" id="UPA00588">
    <property type="reaction ID" value="UER00649"/>
</dbReference>
<dbReference type="Proteomes" id="UP000000579">
    <property type="component" value="Chromosome"/>
</dbReference>
<dbReference type="GO" id="GO:0005737">
    <property type="term" value="C:cytoplasm"/>
    <property type="evidence" value="ECO:0000318"/>
    <property type="project" value="GO_Central"/>
</dbReference>
<dbReference type="GO" id="GO:0005829">
    <property type="term" value="C:cytosol"/>
    <property type="evidence" value="ECO:0000318"/>
    <property type="project" value="GO_Central"/>
</dbReference>
<dbReference type="GO" id="GO:0004017">
    <property type="term" value="F:adenylate kinase activity"/>
    <property type="evidence" value="ECO:0000318"/>
    <property type="project" value="GO_Central"/>
</dbReference>
<dbReference type="GO" id="GO:0005524">
    <property type="term" value="F:ATP binding"/>
    <property type="evidence" value="ECO:0007669"/>
    <property type="project" value="UniProtKB-UniRule"/>
</dbReference>
<dbReference type="GO" id="GO:0004550">
    <property type="term" value="F:nucleoside diphosphate kinase activity"/>
    <property type="evidence" value="ECO:0000318"/>
    <property type="project" value="GO_Central"/>
</dbReference>
<dbReference type="GO" id="GO:0044209">
    <property type="term" value="P:AMP salvage"/>
    <property type="evidence" value="ECO:0007669"/>
    <property type="project" value="UniProtKB-UniRule"/>
</dbReference>
<dbReference type="GO" id="GO:0009132">
    <property type="term" value="P:nucleoside diphosphate metabolic process"/>
    <property type="evidence" value="ECO:0000318"/>
    <property type="project" value="GO_Central"/>
</dbReference>
<dbReference type="GO" id="GO:0009123">
    <property type="term" value="P:nucleoside monophosphate metabolic process"/>
    <property type="evidence" value="ECO:0000318"/>
    <property type="project" value="GO_Central"/>
</dbReference>
<dbReference type="CDD" id="cd01428">
    <property type="entry name" value="ADK"/>
    <property type="match status" value="1"/>
</dbReference>
<dbReference type="FunFam" id="3.40.50.300:FF:000106">
    <property type="entry name" value="Adenylate kinase mitochondrial"/>
    <property type="match status" value="1"/>
</dbReference>
<dbReference type="Gene3D" id="3.40.50.300">
    <property type="entry name" value="P-loop containing nucleotide triphosphate hydrolases"/>
    <property type="match status" value="1"/>
</dbReference>
<dbReference type="HAMAP" id="MF_00235">
    <property type="entry name" value="Adenylate_kinase_Adk"/>
    <property type="match status" value="1"/>
</dbReference>
<dbReference type="InterPro" id="IPR006259">
    <property type="entry name" value="Adenyl_kin_sub"/>
</dbReference>
<dbReference type="InterPro" id="IPR000850">
    <property type="entry name" value="Adenylat/UMP-CMP_kin"/>
</dbReference>
<dbReference type="InterPro" id="IPR033690">
    <property type="entry name" value="Adenylat_kinase_CS"/>
</dbReference>
<dbReference type="InterPro" id="IPR007862">
    <property type="entry name" value="Adenylate_kinase_lid-dom"/>
</dbReference>
<dbReference type="InterPro" id="IPR027417">
    <property type="entry name" value="P-loop_NTPase"/>
</dbReference>
<dbReference type="NCBIfam" id="TIGR01351">
    <property type="entry name" value="adk"/>
    <property type="match status" value="1"/>
</dbReference>
<dbReference type="NCBIfam" id="NF001379">
    <property type="entry name" value="PRK00279.1-1"/>
    <property type="match status" value="1"/>
</dbReference>
<dbReference type="NCBIfam" id="NF001380">
    <property type="entry name" value="PRK00279.1-2"/>
    <property type="match status" value="1"/>
</dbReference>
<dbReference type="NCBIfam" id="NF001381">
    <property type="entry name" value="PRK00279.1-3"/>
    <property type="match status" value="1"/>
</dbReference>
<dbReference type="NCBIfam" id="NF011100">
    <property type="entry name" value="PRK14527.1"/>
    <property type="match status" value="1"/>
</dbReference>
<dbReference type="PANTHER" id="PTHR23359">
    <property type="entry name" value="NUCLEOTIDE KINASE"/>
    <property type="match status" value="1"/>
</dbReference>
<dbReference type="Pfam" id="PF00406">
    <property type="entry name" value="ADK"/>
    <property type="match status" value="1"/>
</dbReference>
<dbReference type="Pfam" id="PF05191">
    <property type="entry name" value="ADK_lid"/>
    <property type="match status" value="1"/>
</dbReference>
<dbReference type="PRINTS" id="PR00094">
    <property type="entry name" value="ADENYLTKNASE"/>
</dbReference>
<dbReference type="SUPFAM" id="SSF52540">
    <property type="entry name" value="P-loop containing nucleoside triphosphate hydrolases"/>
    <property type="match status" value="1"/>
</dbReference>
<dbReference type="PROSITE" id="PS00113">
    <property type="entry name" value="ADENYLATE_KINASE"/>
    <property type="match status" value="1"/>
</dbReference>
<organism>
    <name type="scientific">Haemophilus influenzae (strain ATCC 51907 / DSM 11121 / KW20 / Rd)</name>
    <dbReference type="NCBI Taxonomy" id="71421"/>
    <lineage>
        <taxon>Bacteria</taxon>
        <taxon>Pseudomonadati</taxon>
        <taxon>Pseudomonadota</taxon>
        <taxon>Gammaproteobacteria</taxon>
        <taxon>Pasteurellales</taxon>
        <taxon>Pasteurellaceae</taxon>
        <taxon>Haemophilus</taxon>
    </lineage>
</organism>
<keyword id="KW-0067">ATP-binding</keyword>
<keyword id="KW-0963">Cytoplasm</keyword>
<keyword id="KW-0418">Kinase</keyword>
<keyword id="KW-0545">Nucleotide biosynthesis</keyword>
<keyword id="KW-0547">Nucleotide-binding</keyword>
<keyword id="KW-1185">Reference proteome</keyword>
<keyword id="KW-0808">Transferase</keyword>
<proteinExistence type="inferred from homology"/>